<feature type="chain" id="PRO_0000064045" description="Aquaporin PIP1-1">
    <location>
        <begin position="1"/>
        <end position="286"/>
    </location>
</feature>
<feature type="topological domain" description="Cytoplasmic" evidence="2">
    <location>
        <begin position="1"/>
        <end position="54"/>
    </location>
</feature>
<feature type="transmembrane region" description="Helical; Name=1" evidence="2">
    <location>
        <begin position="55"/>
        <end position="75"/>
    </location>
</feature>
<feature type="topological domain" description="Extracellular" evidence="2">
    <location>
        <begin position="76"/>
        <end position="91"/>
    </location>
</feature>
<feature type="transmembrane region" description="Helical; Name=2" evidence="2">
    <location>
        <begin position="92"/>
        <end position="112"/>
    </location>
</feature>
<feature type="topological domain" description="Cytoplasmic" evidence="2">
    <location>
        <begin position="113"/>
        <end position="132"/>
    </location>
</feature>
<feature type="transmembrane region" description="Helical; Name=3" evidence="2">
    <location>
        <begin position="133"/>
        <end position="153"/>
    </location>
</feature>
<feature type="topological domain" description="Extracellular" evidence="2">
    <location>
        <begin position="154"/>
        <end position="174"/>
    </location>
</feature>
<feature type="transmembrane region" description="Helical; Name=4" evidence="2">
    <location>
        <begin position="175"/>
        <end position="195"/>
    </location>
</feature>
<feature type="topological domain" description="Cytoplasmic" evidence="2">
    <location>
        <begin position="196"/>
        <end position="208"/>
    </location>
</feature>
<feature type="transmembrane region" description="Helical; Name=5" evidence="2">
    <location>
        <begin position="209"/>
        <end position="229"/>
    </location>
</feature>
<feature type="topological domain" description="Extracellular" evidence="2">
    <location>
        <begin position="230"/>
        <end position="256"/>
    </location>
</feature>
<feature type="transmembrane region" description="Helical; Name=6" evidence="2">
    <location>
        <begin position="257"/>
        <end position="277"/>
    </location>
</feature>
<feature type="topological domain" description="Cytoplasmic" evidence="2">
    <location>
        <begin position="278"/>
        <end position="286"/>
    </location>
</feature>
<feature type="region of interest" description="Disordered" evidence="3">
    <location>
        <begin position="1"/>
        <end position="34"/>
    </location>
</feature>
<feature type="short sequence motif" description="NPA 1">
    <location>
        <begin position="114"/>
        <end position="116"/>
    </location>
</feature>
<feature type="short sequence motif" description="NPA 2">
    <location>
        <begin position="235"/>
        <end position="237"/>
    </location>
</feature>
<feature type="modified residue" description="N-acetylmethionine" evidence="5">
    <location>
        <position position="1"/>
    </location>
</feature>
<feature type="modified residue" description="Phosphoserine" evidence="1">
    <location>
        <position position="284"/>
    </location>
</feature>
<feature type="sequence conflict" description="In Ref. 5; AAM65975." evidence="7" ref="5">
    <original>F</original>
    <variation>L</variation>
    <location>
        <position position="15"/>
    </location>
</feature>
<feature type="sequence conflict" description="In Ref. 1; CAA53475." evidence="7" ref="1">
    <original>G</original>
    <variation>A</variation>
    <location>
        <position position="231"/>
    </location>
</feature>
<reference key="1">
    <citation type="journal article" date="1994" name="Plant J.">
        <title>Water channels in the plant plasma membrane cloned by immunoselection from a mammalian expression system.</title>
        <authorList>
            <person name="Kammerloher W."/>
            <person name="Fischer U."/>
            <person name="Piechottka G.P."/>
            <person name="Schaeffner A.R."/>
        </authorList>
    </citation>
    <scope>NUCLEOTIDE SEQUENCE [MRNA]</scope>
    <scope>FUNCTION</scope>
    <scope>SUBCELLULAR LOCATION</scope>
    <scope>TISSUE SPECIFICITY</scope>
    <source>
        <strain>cv. Landsberg erecta</strain>
        <tissue>Root</tissue>
    </source>
</reference>
<reference key="2">
    <citation type="journal article" date="2000" name="Nature">
        <title>Sequence and analysis of chromosome 3 of the plant Arabidopsis thaliana.</title>
        <authorList>
            <person name="Salanoubat M."/>
            <person name="Lemcke K."/>
            <person name="Rieger M."/>
            <person name="Ansorge W."/>
            <person name="Unseld M."/>
            <person name="Fartmann B."/>
            <person name="Valle G."/>
            <person name="Bloecker H."/>
            <person name="Perez-Alonso M."/>
            <person name="Obermaier B."/>
            <person name="Delseny M."/>
            <person name="Boutry M."/>
            <person name="Grivell L.A."/>
            <person name="Mache R."/>
            <person name="Puigdomenech P."/>
            <person name="De Simone V."/>
            <person name="Choisne N."/>
            <person name="Artiguenave F."/>
            <person name="Robert C."/>
            <person name="Brottier P."/>
            <person name="Wincker P."/>
            <person name="Cattolico L."/>
            <person name="Weissenbach J."/>
            <person name="Saurin W."/>
            <person name="Quetier F."/>
            <person name="Schaefer M."/>
            <person name="Mueller-Auer S."/>
            <person name="Gabel C."/>
            <person name="Fuchs M."/>
            <person name="Benes V."/>
            <person name="Wurmbach E."/>
            <person name="Drzonek H."/>
            <person name="Erfle H."/>
            <person name="Jordan N."/>
            <person name="Bangert S."/>
            <person name="Wiedelmann R."/>
            <person name="Kranz H."/>
            <person name="Voss H."/>
            <person name="Holland R."/>
            <person name="Brandt P."/>
            <person name="Nyakatura G."/>
            <person name="Vezzi A."/>
            <person name="D'Angelo M."/>
            <person name="Pallavicini A."/>
            <person name="Toppo S."/>
            <person name="Simionati B."/>
            <person name="Conrad A."/>
            <person name="Hornischer K."/>
            <person name="Kauer G."/>
            <person name="Loehnert T.-H."/>
            <person name="Nordsiek G."/>
            <person name="Reichelt J."/>
            <person name="Scharfe M."/>
            <person name="Schoen O."/>
            <person name="Bargues M."/>
            <person name="Terol J."/>
            <person name="Climent J."/>
            <person name="Navarro P."/>
            <person name="Collado C."/>
            <person name="Perez-Perez A."/>
            <person name="Ottenwaelder B."/>
            <person name="Duchemin D."/>
            <person name="Cooke R."/>
            <person name="Laudie M."/>
            <person name="Berger-Llauro C."/>
            <person name="Purnelle B."/>
            <person name="Masuy D."/>
            <person name="de Haan M."/>
            <person name="Maarse A.C."/>
            <person name="Alcaraz J.-P."/>
            <person name="Cottet A."/>
            <person name="Casacuberta E."/>
            <person name="Monfort A."/>
            <person name="Argiriou A."/>
            <person name="Flores M."/>
            <person name="Liguori R."/>
            <person name="Vitale D."/>
            <person name="Mannhaupt G."/>
            <person name="Haase D."/>
            <person name="Schoof H."/>
            <person name="Rudd S."/>
            <person name="Zaccaria P."/>
            <person name="Mewes H.-W."/>
            <person name="Mayer K.F.X."/>
            <person name="Kaul S."/>
            <person name="Town C.D."/>
            <person name="Koo H.L."/>
            <person name="Tallon L.J."/>
            <person name="Jenkins J."/>
            <person name="Rooney T."/>
            <person name="Rizzo M."/>
            <person name="Walts A."/>
            <person name="Utterback T."/>
            <person name="Fujii C.Y."/>
            <person name="Shea T.P."/>
            <person name="Creasy T.H."/>
            <person name="Haas B."/>
            <person name="Maiti R."/>
            <person name="Wu D."/>
            <person name="Peterson J."/>
            <person name="Van Aken S."/>
            <person name="Pai G."/>
            <person name="Militscher J."/>
            <person name="Sellers P."/>
            <person name="Gill J.E."/>
            <person name="Feldblyum T.V."/>
            <person name="Preuss D."/>
            <person name="Lin X."/>
            <person name="Nierman W.C."/>
            <person name="Salzberg S.L."/>
            <person name="White O."/>
            <person name="Venter J.C."/>
            <person name="Fraser C.M."/>
            <person name="Kaneko T."/>
            <person name="Nakamura Y."/>
            <person name="Sato S."/>
            <person name="Kato T."/>
            <person name="Asamizu E."/>
            <person name="Sasamoto S."/>
            <person name="Kimura T."/>
            <person name="Idesawa K."/>
            <person name="Kawashima K."/>
            <person name="Kishida Y."/>
            <person name="Kiyokawa C."/>
            <person name="Kohara M."/>
            <person name="Matsumoto M."/>
            <person name="Matsuno A."/>
            <person name="Muraki A."/>
            <person name="Nakayama S."/>
            <person name="Nakazaki N."/>
            <person name="Shinpo S."/>
            <person name="Takeuchi C."/>
            <person name="Wada T."/>
            <person name="Watanabe A."/>
            <person name="Yamada M."/>
            <person name="Yasuda M."/>
            <person name="Tabata S."/>
        </authorList>
    </citation>
    <scope>NUCLEOTIDE SEQUENCE [LARGE SCALE GENOMIC DNA]</scope>
    <source>
        <strain>cv. Columbia</strain>
    </source>
</reference>
<reference key="3">
    <citation type="journal article" date="2017" name="Plant J.">
        <title>Araport11: a complete reannotation of the Arabidopsis thaliana reference genome.</title>
        <authorList>
            <person name="Cheng C.Y."/>
            <person name="Krishnakumar V."/>
            <person name="Chan A.P."/>
            <person name="Thibaud-Nissen F."/>
            <person name="Schobel S."/>
            <person name="Town C.D."/>
        </authorList>
    </citation>
    <scope>GENOME REANNOTATION</scope>
    <source>
        <strain>cv. Columbia</strain>
    </source>
</reference>
<reference key="4">
    <citation type="journal article" date="2003" name="Science">
        <title>Empirical analysis of transcriptional activity in the Arabidopsis genome.</title>
        <authorList>
            <person name="Yamada K."/>
            <person name="Lim J."/>
            <person name="Dale J.M."/>
            <person name="Chen H."/>
            <person name="Shinn P."/>
            <person name="Palm C.J."/>
            <person name="Southwick A.M."/>
            <person name="Wu H.C."/>
            <person name="Kim C.J."/>
            <person name="Nguyen M."/>
            <person name="Pham P.K."/>
            <person name="Cheuk R.F."/>
            <person name="Karlin-Newmann G."/>
            <person name="Liu S.X."/>
            <person name="Lam B."/>
            <person name="Sakano H."/>
            <person name="Wu T."/>
            <person name="Yu G."/>
            <person name="Miranda M."/>
            <person name="Quach H.L."/>
            <person name="Tripp M."/>
            <person name="Chang C.H."/>
            <person name="Lee J.M."/>
            <person name="Toriumi M.J."/>
            <person name="Chan M.M."/>
            <person name="Tang C.C."/>
            <person name="Onodera C.S."/>
            <person name="Deng J.M."/>
            <person name="Akiyama K."/>
            <person name="Ansari Y."/>
            <person name="Arakawa T."/>
            <person name="Banh J."/>
            <person name="Banno F."/>
            <person name="Bowser L."/>
            <person name="Brooks S.Y."/>
            <person name="Carninci P."/>
            <person name="Chao Q."/>
            <person name="Choy N."/>
            <person name="Enju A."/>
            <person name="Goldsmith A.D."/>
            <person name="Gurjal M."/>
            <person name="Hansen N.F."/>
            <person name="Hayashizaki Y."/>
            <person name="Johnson-Hopson C."/>
            <person name="Hsuan V.W."/>
            <person name="Iida K."/>
            <person name="Karnes M."/>
            <person name="Khan S."/>
            <person name="Koesema E."/>
            <person name="Ishida J."/>
            <person name="Jiang P.X."/>
            <person name="Jones T."/>
            <person name="Kawai J."/>
            <person name="Kamiya A."/>
            <person name="Meyers C."/>
            <person name="Nakajima M."/>
            <person name="Narusaka M."/>
            <person name="Seki M."/>
            <person name="Sakurai T."/>
            <person name="Satou M."/>
            <person name="Tamse R."/>
            <person name="Vaysberg M."/>
            <person name="Wallender E.K."/>
            <person name="Wong C."/>
            <person name="Yamamura Y."/>
            <person name="Yuan S."/>
            <person name="Shinozaki K."/>
            <person name="Davis R.W."/>
            <person name="Theologis A."/>
            <person name="Ecker J.R."/>
        </authorList>
    </citation>
    <scope>NUCLEOTIDE SEQUENCE [LARGE SCALE MRNA]</scope>
    <source>
        <strain>cv. Columbia</strain>
    </source>
</reference>
<reference key="5">
    <citation type="submission" date="2006-07" db="EMBL/GenBank/DDBJ databases">
        <title>Large-scale analysis of RIKEN Arabidopsis full-length (RAFL) cDNAs.</title>
        <authorList>
            <person name="Totoki Y."/>
            <person name="Seki M."/>
            <person name="Ishida J."/>
            <person name="Nakajima M."/>
            <person name="Enju A."/>
            <person name="Kamiya A."/>
            <person name="Narusaka M."/>
            <person name="Shin-i T."/>
            <person name="Nakagawa M."/>
            <person name="Sakamoto N."/>
            <person name="Oishi K."/>
            <person name="Kohara Y."/>
            <person name="Kobayashi M."/>
            <person name="Toyoda A."/>
            <person name="Sakaki Y."/>
            <person name="Sakurai T."/>
            <person name="Iida K."/>
            <person name="Akiyama K."/>
            <person name="Satou M."/>
            <person name="Toyoda T."/>
            <person name="Konagaya A."/>
            <person name="Carninci P."/>
            <person name="Kawai J."/>
            <person name="Hayashizaki Y."/>
            <person name="Shinozaki K."/>
        </authorList>
    </citation>
    <scope>NUCLEOTIDE SEQUENCE [LARGE SCALE MRNA]</scope>
    <source>
        <strain>cv. Columbia</strain>
    </source>
</reference>
<reference key="6">
    <citation type="submission" date="2002-03" db="EMBL/GenBank/DDBJ databases">
        <title>Full-length cDNA from Arabidopsis thaliana.</title>
        <authorList>
            <person name="Brover V.V."/>
            <person name="Troukhan M.E."/>
            <person name="Alexandrov N.A."/>
            <person name="Lu Y.-P."/>
            <person name="Flavell R.B."/>
            <person name="Feldmann K.A."/>
        </authorList>
    </citation>
    <scope>NUCLEOTIDE SEQUENCE [LARGE SCALE MRNA]</scope>
</reference>
<reference key="7">
    <citation type="journal article" date="2002" name="Genome Biol.">
        <title>From genome to function: the Arabidopsis aquaporins.</title>
        <authorList>
            <person name="Quigley F."/>
            <person name="Rosenberg J.M."/>
            <person name="Shachar-Hill Y."/>
            <person name="Bohnert H.J."/>
        </authorList>
    </citation>
    <scope>NOMENCLATURE</scope>
    <scope>TISSUE SPECIFICITY</scope>
</reference>
<reference key="8">
    <citation type="journal article" date="2006" name="Biochem. J.">
        <title>Methylation of aquaporins in plant plasma membrane.</title>
        <authorList>
            <person name="Santoni V."/>
            <person name="Verdoucq L."/>
            <person name="Sommerer N."/>
            <person name="Vinh J."/>
            <person name="Pflieger D."/>
            <person name="Maurel C."/>
        </authorList>
    </citation>
    <scope>ACETYLATION AT MET-1</scope>
    <scope>IDENTIFICATION BY MASS SPECTROMETRY</scope>
</reference>
<accession>P61837</accession>
<accession>P43285</accession>
<accession>Q0WP60</accession>
<accession>Q8L9H0</accession>
<accession>Q9LDT6</accession>
<comment type="function">
    <text evidence="6">Water channel required to facilitate the transport of water across cell membrane. Its function is impaired by Hg(2+).</text>
</comment>
<comment type="subcellular location">
    <subcellularLocation>
        <location evidence="6">Cell membrane</location>
        <topology evidence="6">Multi-pass membrane protein</topology>
    </subcellularLocation>
</comment>
<comment type="tissue specificity">
    <text evidence="4 6">Widely expressed. Expressed in roots, above ground and in flower buds.</text>
</comment>
<comment type="domain">
    <text>Aquaporins contain two tandem repeats each containing three membrane-spanning domains and a pore-forming loop with the signature motif Asn-Pro-Ala (NPA).</text>
</comment>
<comment type="similarity">
    <text evidence="7">Belongs to the MIP/aquaporin (TC 1.A.8) family. PIP (TC 1.A.8.11) subfamily.</text>
</comment>
<comment type="online information" name="Protein Spotlight">
    <link uri="https://www.proteinspotlight.org/back_issues/036"/>
    <text>Liquid states - Issue 36 of July 2003</text>
</comment>
<sequence length="286" mass="30689">MEGKEEDVRVGANKFPERQPIGTSAQSDKDYKEPPPAPFFEPGELSSWSFWRAGIAEFIATFLFLYITVLTVMGVKRSPNMCASVGIQGIAWAFGGMIFALVYCTAGISGGHINPAVTFGLFLARKLSLTRALYYIVMQCLGAICGAGVVKGFQPKQYQALGGGANTVAHGYTKGSGLGAEIIGTFVLVYTVFSATDAKRNARDSHVPILAPLPIGFAVFLVHLATIPITGTGINPARSLGAAIIYNKDHSWDDHWVFWVGPFIGAALAALYHVVVIRAIPFKSRS</sequence>
<organism>
    <name type="scientific">Arabidopsis thaliana</name>
    <name type="common">Mouse-ear cress</name>
    <dbReference type="NCBI Taxonomy" id="3702"/>
    <lineage>
        <taxon>Eukaryota</taxon>
        <taxon>Viridiplantae</taxon>
        <taxon>Streptophyta</taxon>
        <taxon>Embryophyta</taxon>
        <taxon>Tracheophyta</taxon>
        <taxon>Spermatophyta</taxon>
        <taxon>Magnoliopsida</taxon>
        <taxon>eudicotyledons</taxon>
        <taxon>Gunneridae</taxon>
        <taxon>Pentapetalae</taxon>
        <taxon>rosids</taxon>
        <taxon>malvids</taxon>
        <taxon>Brassicales</taxon>
        <taxon>Brassicaceae</taxon>
        <taxon>Camelineae</taxon>
        <taxon>Arabidopsis</taxon>
    </lineage>
</organism>
<protein>
    <recommendedName>
        <fullName>Aquaporin PIP1-1</fullName>
        <shortName>AtPIP1;1</shortName>
    </recommendedName>
    <alternativeName>
        <fullName>Plasma membrane aquaporin-1</fullName>
    </alternativeName>
    <alternativeName>
        <fullName>Plasma membrane intrinsic protein 1a</fullName>
        <shortName>PIP1a</shortName>
    </alternativeName>
</protein>
<name>PIP11_ARATH</name>
<proteinExistence type="evidence at protein level"/>
<gene>
    <name type="primary">PIP1-1</name>
    <name type="synonym">PIP1A</name>
    <name type="ordered locus">At3g61430</name>
    <name type="ORF">F2A19.30</name>
</gene>
<evidence type="ECO:0000250" key="1">
    <source>
        <dbReference type="UniProtKB" id="P43286"/>
    </source>
</evidence>
<evidence type="ECO:0000255" key="2"/>
<evidence type="ECO:0000256" key="3">
    <source>
        <dbReference type="SAM" id="MobiDB-lite"/>
    </source>
</evidence>
<evidence type="ECO:0000269" key="4">
    <source>
    </source>
</evidence>
<evidence type="ECO:0000269" key="5">
    <source>
    </source>
</evidence>
<evidence type="ECO:0000269" key="6">
    <source>
    </source>
</evidence>
<evidence type="ECO:0000305" key="7"/>
<dbReference type="EMBL" id="X75881">
    <property type="protein sequence ID" value="CAA53475.1"/>
    <property type="molecule type" value="mRNA"/>
</dbReference>
<dbReference type="EMBL" id="AL132962">
    <property type="protein sequence ID" value="CAB71073.1"/>
    <property type="molecule type" value="Genomic_DNA"/>
</dbReference>
<dbReference type="EMBL" id="CP002686">
    <property type="protein sequence ID" value="AEE80201.1"/>
    <property type="molecule type" value="Genomic_DNA"/>
</dbReference>
<dbReference type="EMBL" id="CP002686">
    <property type="protein sequence ID" value="AEE80202.1"/>
    <property type="molecule type" value="Genomic_DNA"/>
</dbReference>
<dbReference type="EMBL" id="AY097398">
    <property type="protein sequence ID" value="AAM19914.1"/>
    <property type="molecule type" value="mRNA"/>
</dbReference>
<dbReference type="EMBL" id="AY058113">
    <property type="protein sequence ID" value="AAL25530.1"/>
    <property type="molecule type" value="mRNA"/>
</dbReference>
<dbReference type="EMBL" id="AK229222">
    <property type="protein sequence ID" value="BAF01089.1"/>
    <property type="molecule type" value="mRNA"/>
</dbReference>
<dbReference type="EMBL" id="AY088439">
    <property type="protein sequence ID" value="AAM65975.1"/>
    <property type="molecule type" value="mRNA"/>
</dbReference>
<dbReference type="PIR" id="T47935">
    <property type="entry name" value="T47935"/>
</dbReference>
<dbReference type="RefSeq" id="NP_001078323.1">
    <property type="nucleotide sequence ID" value="NM_001084854.2"/>
</dbReference>
<dbReference type="RefSeq" id="NP_191702.1">
    <property type="nucleotide sequence ID" value="NM_116008.4"/>
</dbReference>
<dbReference type="SMR" id="P61837"/>
<dbReference type="BioGRID" id="10630">
    <property type="interactions" value="12"/>
</dbReference>
<dbReference type="FunCoup" id="P61837">
    <property type="interactions" value="206"/>
</dbReference>
<dbReference type="IntAct" id="P61837">
    <property type="interactions" value="5"/>
</dbReference>
<dbReference type="STRING" id="3702.P61837"/>
<dbReference type="TCDB" id="1.A.8.11.3">
    <property type="family name" value="the major intrinsic protein (mip) family"/>
</dbReference>
<dbReference type="iPTMnet" id="P61837"/>
<dbReference type="PaxDb" id="3702-AT3G61430.2"/>
<dbReference type="ProteomicsDB" id="234958"/>
<dbReference type="EnsemblPlants" id="AT3G61430.1">
    <property type="protein sequence ID" value="AT3G61430.1"/>
    <property type="gene ID" value="AT3G61430"/>
</dbReference>
<dbReference type="EnsemblPlants" id="AT3G61430.2">
    <property type="protein sequence ID" value="AT3G61430.2"/>
    <property type="gene ID" value="AT3G61430"/>
</dbReference>
<dbReference type="GeneID" id="825316"/>
<dbReference type="Gramene" id="AT3G61430.1">
    <property type="protein sequence ID" value="AT3G61430.1"/>
    <property type="gene ID" value="AT3G61430"/>
</dbReference>
<dbReference type="Gramene" id="AT3G61430.2">
    <property type="protein sequence ID" value="AT3G61430.2"/>
    <property type="gene ID" value="AT3G61430"/>
</dbReference>
<dbReference type="KEGG" id="ath:AT3G61430"/>
<dbReference type="Araport" id="AT3G61430"/>
<dbReference type="TAIR" id="AT3G61430">
    <property type="gene designation" value="PIP1A"/>
</dbReference>
<dbReference type="eggNOG" id="KOG0223">
    <property type="taxonomic scope" value="Eukaryota"/>
</dbReference>
<dbReference type="HOGENOM" id="CLU_020019_3_0_1"/>
<dbReference type="InParanoid" id="P61837"/>
<dbReference type="OMA" id="QASCHEF"/>
<dbReference type="OrthoDB" id="1026065at2759"/>
<dbReference type="PhylomeDB" id="P61837"/>
<dbReference type="PRO" id="PR:P61837"/>
<dbReference type="Proteomes" id="UP000006548">
    <property type="component" value="Chromosome 3"/>
</dbReference>
<dbReference type="ExpressionAtlas" id="P61837">
    <property type="expression patterns" value="baseline and differential"/>
</dbReference>
<dbReference type="GO" id="GO:0009941">
    <property type="term" value="C:chloroplast envelope"/>
    <property type="evidence" value="ECO:0007005"/>
    <property type="project" value="TAIR"/>
</dbReference>
<dbReference type="GO" id="GO:0005739">
    <property type="term" value="C:mitochondrion"/>
    <property type="evidence" value="ECO:0007005"/>
    <property type="project" value="TAIR"/>
</dbReference>
<dbReference type="GO" id="GO:0000325">
    <property type="term" value="C:plant-type vacuole"/>
    <property type="evidence" value="ECO:0007005"/>
    <property type="project" value="TAIR"/>
</dbReference>
<dbReference type="GO" id="GO:0005886">
    <property type="term" value="C:plasma membrane"/>
    <property type="evidence" value="ECO:0000314"/>
    <property type="project" value="TAIR"/>
</dbReference>
<dbReference type="GO" id="GO:0009506">
    <property type="term" value="C:plasmodesma"/>
    <property type="evidence" value="ECO:0007005"/>
    <property type="project" value="TAIR"/>
</dbReference>
<dbReference type="GO" id="GO:0015250">
    <property type="term" value="F:water channel activity"/>
    <property type="evidence" value="ECO:0000314"/>
    <property type="project" value="TAIR"/>
</dbReference>
<dbReference type="GO" id="GO:0009414">
    <property type="term" value="P:response to water deprivation"/>
    <property type="evidence" value="ECO:0000270"/>
    <property type="project" value="TAIR"/>
</dbReference>
<dbReference type="GO" id="GO:0006833">
    <property type="term" value="P:water transport"/>
    <property type="evidence" value="ECO:0000314"/>
    <property type="project" value="TAIR"/>
</dbReference>
<dbReference type="CDD" id="cd00333">
    <property type="entry name" value="MIP"/>
    <property type="match status" value="1"/>
</dbReference>
<dbReference type="FunFam" id="1.20.1080.10:FF:000001">
    <property type="entry name" value="Probable aquaporin PIP1-2"/>
    <property type="match status" value="1"/>
</dbReference>
<dbReference type="Gene3D" id="1.20.1080.10">
    <property type="entry name" value="Glycerol uptake facilitator protein"/>
    <property type="match status" value="1"/>
</dbReference>
<dbReference type="InterPro" id="IPR023271">
    <property type="entry name" value="Aquaporin-like"/>
</dbReference>
<dbReference type="InterPro" id="IPR034294">
    <property type="entry name" value="Aquaporin_transptr"/>
</dbReference>
<dbReference type="InterPro" id="IPR000425">
    <property type="entry name" value="MIP"/>
</dbReference>
<dbReference type="InterPro" id="IPR022357">
    <property type="entry name" value="MIP_CS"/>
</dbReference>
<dbReference type="NCBIfam" id="TIGR00861">
    <property type="entry name" value="MIP"/>
    <property type="match status" value="1"/>
</dbReference>
<dbReference type="PANTHER" id="PTHR45687">
    <property type="entry name" value="AQUAPORIN OR AQUAGLYCEROPORIN RELATED"/>
    <property type="match status" value="1"/>
</dbReference>
<dbReference type="Pfam" id="PF00230">
    <property type="entry name" value="MIP"/>
    <property type="match status" value="1"/>
</dbReference>
<dbReference type="PRINTS" id="PR00783">
    <property type="entry name" value="MINTRINSICP"/>
</dbReference>
<dbReference type="SUPFAM" id="SSF81338">
    <property type="entry name" value="Aquaporin-like"/>
    <property type="match status" value="1"/>
</dbReference>
<dbReference type="PROSITE" id="PS00221">
    <property type="entry name" value="MIP"/>
    <property type="match status" value="1"/>
</dbReference>
<keyword id="KW-0007">Acetylation</keyword>
<keyword id="KW-1003">Cell membrane</keyword>
<keyword id="KW-0472">Membrane</keyword>
<keyword id="KW-0597">Phosphoprotein</keyword>
<keyword id="KW-1185">Reference proteome</keyword>
<keyword id="KW-0677">Repeat</keyword>
<keyword id="KW-0812">Transmembrane</keyword>
<keyword id="KW-1133">Transmembrane helix</keyword>
<keyword id="KW-0813">Transport</keyword>